<gene>
    <name type="ordered locus">FRAAL3294</name>
</gene>
<protein>
    <recommendedName>
        <fullName evidence="1">Putative glutamate--cysteine ligase 2-2</fullName>
        <ecNumber evidence="1">6.3.2.2</ecNumber>
    </recommendedName>
    <alternativeName>
        <fullName evidence="1">Gamma-glutamylcysteine synthetase 2-2</fullName>
        <shortName evidence="1">GCS 2-2</shortName>
        <shortName evidence="1">Gamma-GCS 2-2</shortName>
    </alternativeName>
</protein>
<dbReference type="EC" id="6.3.2.2" evidence="1"/>
<dbReference type="EMBL" id="CT573213">
    <property type="protein sequence ID" value="CAJ61938.1"/>
    <property type="molecule type" value="Genomic_DNA"/>
</dbReference>
<dbReference type="RefSeq" id="WP_011604442.1">
    <property type="nucleotide sequence ID" value="NC_008278.1"/>
</dbReference>
<dbReference type="SMR" id="Q0RKL9"/>
<dbReference type="STRING" id="326424.FRAAL3294"/>
<dbReference type="KEGG" id="fal:FRAAL3294"/>
<dbReference type="eggNOG" id="COG2170">
    <property type="taxonomic scope" value="Bacteria"/>
</dbReference>
<dbReference type="HOGENOM" id="CLU_044848_1_0_11"/>
<dbReference type="OrthoDB" id="9803842at2"/>
<dbReference type="Proteomes" id="UP000000657">
    <property type="component" value="Chromosome"/>
</dbReference>
<dbReference type="GO" id="GO:0005524">
    <property type="term" value="F:ATP binding"/>
    <property type="evidence" value="ECO:0007669"/>
    <property type="project" value="UniProtKB-KW"/>
</dbReference>
<dbReference type="GO" id="GO:0004357">
    <property type="term" value="F:glutamate-cysteine ligase activity"/>
    <property type="evidence" value="ECO:0007669"/>
    <property type="project" value="UniProtKB-EC"/>
</dbReference>
<dbReference type="GO" id="GO:0042398">
    <property type="term" value="P:modified amino acid biosynthetic process"/>
    <property type="evidence" value="ECO:0007669"/>
    <property type="project" value="InterPro"/>
</dbReference>
<dbReference type="Gene3D" id="3.30.590.20">
    <property type="match status" value="1"/>
</dbReference>
<dbReference type="HAMAP" id="MF_01609">
    <property type="entry name" value="Glu_cys_ligase_2"/>
    <property type="match status" value="1"/>
</dbReference>
<dbReference type="InterPro" id="IPR050141">
    <property type="entry name" value="GCL_type2/YbdK_subfam"/>
</dbReference>
<dbReference type="InterPro" id="IPR006336">
    <property type="entry name" value="GCS2"/>
</dbReference>
<dbReference type="InterPro" id="IPR014746">
    <property type="entry name" value="Gln_synth/guanido_kin_cat_dom"/>
</dbReference>
<dbReference type="InterPro" id="IPR011793">
    <property type="entry name" value="YbdK"/>
</dbReference>
<dbReference type="NCBIfam" id="TIGR02050">
    <property type="entry name" value="gshA_cyan_rel"/>
    <property type="match status" value="1"/>
</dbReference>
<dbReference type="NCBIfam" id="NF010041">
    <property type="entry name" value="PRK13517.1-1"/>
    <property type="match status" value="1"/>
</dbReference>
<dbReference type="PANTHER" id="PTHR36510">
    <property type="entry name" value="GLUTAMATE--CYSTEINE LIGASE 2-RELATED"/>
    <property type="match status" value="1"/>
</dbReference>
<dbReference type="PANTHER" id="PTHR36510:SF1">
    <property type="entry name" value="GLUTAMATE--CYSTEINE LIGASE 2-RELATED"/>
    <property type="match status" value="1"/>
</dbReference>
<dbReference type="Pfam" id="PF04107">
    <property type="entry name" value="GCS2"/>
    <property type="match status" value="1"/>
</dbReference>
<dbReference type="SUPFAM" id="SSF55931">
    <property type="entry name" value="Glutamine synthetase/guanido kinase"/>
    <property type="match status" value="1"/>
</dbReference>
<organism>
    <name type="scientific">Frankia alni (strain DSM 45986 / CECT 9034 / ACN14a)</name>
    <dbReference type="NCBI Taxonomy" id="326424"/>
    <lineage>
        <taxon>Bacteria</taxon>
        <taxon>Bacillati</taxon>
        <taxon>Actinomycetota</taxon>
        <taxon>Actinomycetes</taxon>
        <taxon>Frankiales</taxon>
        <taxon>Frankiaceae</taxon>
        <taxon>Frankia</taxon>
    </lineage>
</organism>
<accession>Q0RKL9</accession>
<sequence length="383" mass="40800">MTTEGVRTVGVEEEFVLVDPDRHAVRAAASRVLARGDRDGAGGPPGGADPDGDLDGDLDVELTREQVESGSAPHTSLAGLRGSLVGLRRAAARAAEAAGVALAATATCPTPTRPTITPKPRYERMRGEFGLTAREQLTCGCHVHVAVHSRQEAVGALDRLRPWLSVLVAMTANSPFWQGADSGYASYRTQVWQRWPTAGATGAFGSPAEYDRVVDLLIRTGAAMDDGMIYFDVRLSHHYPTLELRVADVCLSVDDSVLLAALARALVATAARQWAAGEPVPTVRPELLRAAGWRASRHGVSGELVDLERGELVPARALVDRFVEWVGPELSATGDGDAVAALVDNLFARGTGADRQRAAYARRGRIDDVVDLVIRETTTMASP</sequence>
<feature type="chain" id="PRO_0000291491" description="Putative glutamate--cysteine ligase 2-2">
    <location>
        <begin position="1"/>
        <end position="383"/>
    </location>
</feature>
<feature type="region of interest" description="Disordered" evidence="2">
    <location>
        <begin position="35"/>
        <end position="56"/>
    </location>
</feature>
<proteinExistence type="inferred from homology"/>
<reference key="1">
    <citation type="journal article" date="2007" name="Genome Res.">
        <title>Genome characteristics of facultatively symbiotic Frankia sp. strains reflect host range and host plant biogeography.</title>
        <authorList>
            <person name="Normand P."/>
            <person name="Lapierre P."/>
            <person name="Tisa L.S."/>
            <person name="Gogarten J.P."/>
            <person name="Alloisio N."/>
            <person name="Bagnarol E."/>
            <person name="Bassi C.A."/>
            <person name="Berry A.M."/>
            <person name="Bickhart D.M."/>
            <person name="Choisne N."/>
            <person name="Couloux A."/>
            <person name="Cournoyer B."/>
            <person name="Cruveiller S."/>
            <person name="Daubin V."/>
            <person name="Demange N."/>
            <person name="Francino M.P."/>
            <person name="Goltsman E."/>
            <person name="Huang Y."/>
            <person name="Kopp O.R."/>
            <person name="Labarre L."/>
            <person name="Lapidus A."/>
            <person name="Lavire C."/>
            <person name="Marechal J."/>
            <person name="Martinez M."/>
            <person name="Mastronunzio J.E."/>
            <person name="Mullin B.C."/>
            <person name="Niemann J."/>
            <person name="Pujic P."/>
            <person name="Rawnsley T."/>
            <person name="Rouy Z."/>
            <person name="Schenowitz C."/>
            <person name="Sellstedt A."/>
            <person name="Tavares F."/>
            <person name="Tomkins J.P."/>
            <person name="Vallenet D."/>
            <person name="Valverde C."/>
            <person name="Wall L.G."/>
            <person name="Wang Y."/>
            <person name="Medigue C."/>
            <person name="Benson D.R."/>
        </authorList>
    </citation>
    <scope>NUCLEOTIDE SEQUENCE [LARGE SCALE GENOMIC DNA]</scope>
    <source>
        <strain>DSM 45986 / CECT 9034 / ACN14a</strain>
    </source>
</reference>
<name>GCS22_FRAAA</name>
<comment type="function">
    <text evidence="1">ATP-dependent carboxylate-amine ligase which exhibits weak glutamate--cysteine ligase activity.</text>
</comment>
<comment type="catalytic activity">
    <reaction evidence="1">
        <text>L-cysteine + L-glutamate + ATP = gamma-L-glutamyl-L-cysteine + ADP + phosphate + H(+)</text>
        <dbReference type="Rhea" id="RHEA:13285"/>
        <dbReference type="ChEBI" id="CHEBI:15378"/>
        <dbReference type="ChEBI" id="CHEBI:29985"/>
        <dbReference type="ChEBI" id="CHEBI:30616"/>
        <dbReference type="ChEBI" id="CHEBI:35235"/>
        <dbReference type="ChEBI" id="CHEBI:43474"/>
        <dbReference type="ChEBI" id="CHEBI:58173"/>
        <dbReference type="ChEBI" id="CHEBI:456216"/>
        <dbReference type="EC" id="6.3.2.2"/>
    </reaction>
</comment>
<comment type="similarity">
    <text evidence="1">Belongs to the glutamate--cysteine ligase type 2 family. YbdK subfamily.</text>
</comment>
<keyword id="KW-0067">ATP-binding</keyword>
<keyword id="KW-0436">Ligase</keyword>
<keyword id="KW-0547">Nucleotide-binding</keyword>
<keyword id="KW-1185">Reference proteome</keyword>
<evidence type="ECO:0000255" key="1">
    <source>
        <dbReference type="HAMAP-Rule" id="MF_01609"/>
    </source>
</evidence>
<evidence type="ECO:0000256" key="2">
    <source>
        <dbReference type="SAM" id="MobiDB-lite"/>
    </source>
</evidence>